<evidence type="ECO:0000250" key="1">
    <source>
        <dbReference type="UniProtKB" id="Q08AH3"/>
    </source>
</evidence>
<evidence type="ECO:0000255" key="2"/>
<evidence type="ECO:0000269" key="3">
    <source>
    </source>
</evidence>
<evidence type="ECO:0000303" key="4">
    <source>
    </source>
</evidence>
<evidence type="ECO:0000305" key="5"/>
<evidence type="ECO:0000305" key="6">
    <source>
    </source>
</evidence>
<evidence type="ECO:0007829" key="7">
    <source>
        <dbReference type="PDB" id="8BIQ"/>
    </source>
</evidence>
<evidence type="ECO:0007829" key="8">
    <source>
        <dbReference type="PDB" id="8BIT"/>
    </source>
</evidence>
<gene>
    <name type="ordered locus">Msed_0406</name>
</gene>
<comment type="function">
    <text evidence="3">Involved in the 3-hydroxypropionate/4-hydroxybutyrate cycle which incorporates carbon dioxide into cellular carbon. Catalyzes the ligation of coenzyme A (CoA) to 4-hydroxybutyrate (4HB). It can also use butyrate, valerate, propionate, acetate and 3-hydroxybutyrate (3HB) as substrates.</text>
</comment>
<comment type="catalytic activity">
    <reaction evidence="3">
        <text>4-hydroxybutanoate + ATP + CoA = 4-hydroxybutanoyl-CoA + AMP + diphosphate</text>
        <dbReference type="Rhea" id="RHEA:23128"/>
        <dbReference type="ChEBI" id="CHEBI:16724"/>
        <dbReference type="ChEBI" id="CHEBI:30616"/>
        <dbReference type="ChEBI" id="CHEBI:33019"/>
        <dbReference type="ChEBI" id="CHEBI:57287"/>
        <dbReference type="ChEBI" id="CHEBI:58574"/>
        <dbReference type="ChEBI" id="CHEBI:456215"/>
        <dbReference type="EC" id="6.2.1.40"/>
    </reaction>
</comment>
<comment type="catalytic activity">
    <reaction evidence="3">
        <text>acetate + ATP + CoA = acetyl-CoA + AMP + diphosphate</text>
        <dbReference type="Rhea" id="RHEA:23176"/>
        <dbReference type="ChEBI" id="CHEBI:30089"/>
        <dbReference type="ChEBI" id="CHEBI:30616"/>
        <dbReference type="ChEBI" id="CHEBI:33019"/>
        <dbReference type="ChEBI" id="CHEBI:57287"/>
        <dbReference type="ChEBI" id="CHEBI:57288"/>
        <dbReference type="ChEBI" id="CHEBI:456215"/>
        <dbReference type="EC" id="6.2.1.1"/>
    </reaction>
</comment>
<comment type="catalytic activity">
    <reaction evidence="3">
        <text>propanoate + ATP + CoA = propanoyl-CoA + AMP + diphosphate</text>
        <dbReference type="Rhea" id="RHEA:20373"/>
        <dbReference type="ChEBI" id="CHEBI:17272"/>
        <dbReference type="ChEBI" id="CHEBI:30616"/>
        <dbReference type="ChEBI" id="CHEBI:33019"/>
        <dbReference type="ChEBI" id="CHEBI:57287"/>
        <dbReference type="ChEBI" id="CHEBI:57392"/>
        <dbReference type="ChEBI" id="CHEBI:456215"/>
        <dbReference type="EC" id="6.2.1.17"/>
    </reaction>
</comment>
<comment type="catalytic activity">
    <reaction evidence="3">
        <text>a medium-chain fatty acid + ATP + CoA = a medium-chain fatty acyl-CoA + AMP + diphosphate</text>
        <dbReference type="Rhea" id="RHEA:48340"/>
        <dbReference type="ChEBI" id="CHEBI:30616"/>
        <dbReference type="ChEBI" id="CHEBI:33019"/>
        <dbReference type="ChEBI" id="CHEBI:57287"/>
        <dbReference type="ChEBI" id="CHEBI:59558"/>
        <dbReference type="ChEBI" id="CHEBI:90546"/>
        <dbReference type="ChEBI" id="CHEBI:456215"/>
        <dbReference type="EC" id="6.2.1.2"/>
    </reaction>
</comment>
<comment type="cofactor">
    <cofactor evidence="1">
        <name>Mg(2+)</name>
        <dbReference type="ChEBI" id="CHEBI:18420"/>
    </cofactor>
    <cofactor evidence="1">
        <name>Mn(2+)</name>
        <dbReference type="ChEBI" id="CHEBI:29035"/>
    </cofactor>
</comment>
<comment type="biophysicochemical properties">
    <kinetics>
        <KM evidence="3">320 uM for butyrate</KM>
        <KM evidence="3">380 uM for propionate</KM>
        <KM evidence="3">740 uM for valerate</KM>
        <KM evidence="3">810 uM for 3HB</KM>
        <KM evidence="3">2000 uM for 4HB</KM>
        <KM evidence="3">2030 uM for acetate</KM>
        <Vmax evidence="3">15.1 umol/min/mg enzyme with propionate as substrate</Vmax>
        <Vmax evidence="3">7.9 umol/min/mg enzyme with butyrate as substrate</Vmax>
        <Vmax evidence="3">6.0 umol/min/mg enzyme with acetate as substrate</Vmax>
        <Vmax evidence="3">5.2 umol/min/mg enzyme with valerate as substrate</Vmax>
        <Vmax evidence="3">2.4 umol/min/mg enzyme with 3HB as substrate</Vmax>
        <Vmax evidence="3">1.7 umol/min/mg enzyme with 4HB as substrate</Vmax>
        <text evidence="3">kcat is 16.2 sec(-1) for ligase activity with propionate as substrate. kcat is 8.4 sec(-1) for ligase activity with butyrate as substrate. kcat is 6.4 sec(-1) for ligase activity with acetate as substrate. kcat is 5.6 sec(-1) for ligase activity with valerate as substrate. kcat is 2.6 sec(-1) for ligase activity with 3HB as substrate. kcat is 1.8 sec(-1) for ligase activity with 4HB as substrate.</text>
    </kinetics>
</comment>
<comment type="subcellular location">
    <subcellularLocation>
        <location evidence="2">Membrane</location>
        <topology evidence="2">Single-pass membrane protein</topology>
    </subcellularLocation>
</comment>
<comment type="similarity">
    <text evidence="5">Belongs to the ATP-dependent AMP-binding enzyme family.</text>
</comment>
<sequence>MVTVQDFFRKFIEFQNSPNEKSLQEIVKLVGQLDLRRFNWVRDVFEDIHVKERGSKTALIWRDINTGEEAKLSYHELSLMSNRVLSTLRKHGLKKGDVVYLMTKVHPMHWAVFLAVIKGGFVMVPSATNLTVAEMKYRFSDLKPSAIISDSLRASVMEEALGSLKVEKFLIDGKRETWNSLEDESSNAEPEDTRGEDVIINYFTSGTTGMPKRVIHTAVSYPVGSITTASIVGVRESDLHLNLSATGWAKFAWSSFFSPLLVGATVVGINYEGKLDTRRYLGEVENLGVTSFCAPPTAWRQFITLDLDQFRFERLRSVVSAGEPLNPEVIKIWKDKFNLTIRDFYGQTETTAMVGNFPFLKVKPGSMGKPHPLYDIRLLDDEGKEITKPYEVGHITVKLNPRPIGLFLGYSDEKKNMESFREGYYYTGDKAYFDEEGYFYFVGRGDDVIKTSDYRVGPFEVESALLEHPAVAEAAVVGVPDTVRWQLVKAYIVLKKGYMPSKELAEEIREKMKTLLSPYKVPRIIEFVDELPKTISGKIRRVELRKREEEKRKKGEVGQNEYVF</sequence>
<feature type="chain" id="PRO_0000435708" description="4-hydroxybutyrate--CoA ligase 1">
    <location>
        <begin position="1"/>
        <end position="564"/>
    </location>
</feature>
<feature type="transmembrane region" description="Helical" evidence="2">
    <location>
        <begin position="105"/>
        <end position="125"/>
    </location>
</feature>
<feature type="binding site" evidence="1">
    <location>
        <begin position="204"/>
        <end position="212"/>
    </location>
    <ligand>
        <name>ATP</name>
        <dbReference type="ChEBI" id="CHEBI:30616"/>
    </ligand>
</feature>
<feature type="binding site" evidence="1">
    <location>
        <begin position="343"/>
        <end position="348"/>
    </location>
    <ligand>
        <name>ATP</name>
        <dbReference type="ChEBI" id="CHEBI:30616"/>
    </ligand>
</feature>
<feature type="binding site" evidence="1">
    <location>
        <position position="348"/>
    </location>
    <ligand>
        <name>substrate</name>
    </ligand>
</feature>
<feature type="binding site" evidence="1">
    <location>
        <position position="429"/>
    </location>
    <ligand>
        <name>ATP</name>
        <dbReference type="ChEBI" id="CHEBI:30616"/>
    </ligand>
</feature>
<feature type="binding site" evidence="1">
    <location>
        <position position="444"/>
    </location>
    <ligand>
        <name>ATP</name>
        <dbReference type="ChEBI" id="CHEBI:30616"/>
    </ligand>
</feature>
<feature type="binding site" evidence="1">
    <location>
        <begin position="452"/>
        <end position="454"/>
    </location>
    <ligand>
        <name>CoA</name>
        <dbReference type="ChEBI" id="CHEBI:57287"/>
    </ligand>
</feature>
<feature type="binding site" evidence="1">
    <location>
        <position position="455"/>
    </location>
    <ligand>
        <name>substrate</name>
    </ligand>
</feature>
<feature type="binding site" evidence="1">
    <location>
        <position position="484"/>
    </location>
    <ligand>
        <name>CoA</name>
        <dbReference type="ChEBI" id="CHEBI:57287"/>
    </ligand>
</feature>
<feature type="binding site" evidence="1">
    <location>
        <position position="513"/>
    </location>
    <ligand>
        <name>CoA</name>
        <dbReference type="ChEBI" id="CHEBI:57287"/>
    </ligand>
</feature>
<feature type="binding site" evidence="1">
    <location>
        <begin position="521"/>
        <end position="523"/>
    </location>
    <ligand>
        <name>CoA</name>
        <dbReference type="ChEBI" id="CHEBI:57287"/>
    </ligand>
</feature>
<feature type="binding site" evidence="1">
    <location>
        <position position="538"/>
    </location>
    <ligand>
        <name>ATP</name>
        <dbReference type="ChEBI" id="CHEBI:30616"/>
    </ligand>
</feature>
<feature type="helix" evidence="7">
    <location>
        <begin position="5"/>
        <end position="16"/>
    </location>
</feature>
<feature type="helix" evidence="7">
    <location>
        <begin position="20"/>
        <end position="31"/>
    </location>
</feature>
<feature type="helix" evidence="7">
    <location>
        <begin position="40"/>
        <end position="43"/>
    </location>
</feature>
<feature type="helix" evidence="7">
    <location>
        <begin position="45"/>
        <end position="48"/>
    </location>
</feature>
<feature type="helix" evidence="7">
    <location>
        <begin position="50"/>
        <end position="53"/>
    </location>
</feature>
<feature type="strand" evidence="7">
    <location>
        <begin position="56"/>
        <end position="63"/>
    </location>
</feature>
<feature type="turn" evidence="7">
    <location>
        <begin position="64"/>
        <end position="66"/>
    </location>
</feature>
<feature type="strand" evidence="7">
    <location>
        <begin position="69"/>
        <end position="73"/>
    </location>
</feature>
<feature type="helix" evidence="7">
    <location>
        <begin position="74"/>
        <end position="90"/>
    </location>
</feature>
<feature type="strand" evidence="7">
    <location>
        <begin position="98"/>
        <end position="102"/>
    </location>
</feature>
<feature type="helix" evidence="7">
    <location>
        <begin position="107"/>
        <end position="119"/>
    </location>
</feature>
<feature type="strand" evidence="7">
    <location>
        <begin position="122"/>
        <end position="125"/>
    </location>
</feature>
<feature type="helix" evidence="7">
    <location>
        <begin position="132"/>
        <end position="141"/>
    </location>
</feature>
<feature type="strand" evidence="7">
    <location>
        <begin position="145"/>
        <end position="149"/>
    </location>
</feature>
<feature type="helix" evidence="7">
    <location>
        <begin position="151"/>
        <end position="153"/>
    </location>
</feature>
<feature type="helix" evidence="7">
    <location>
        <begin position="154"/>
        <end position="161"/>
    </location>
</feature>
<feature type="strand" evidence="7">
    <location>
        <begin position="167"/>
        <end position="173"/>
    </location>
</feature>
<feature type="strand" evidence="8">
    <location>
        <begin position="175"/>
        <end position="177"/>
    </location>
</feature>
<feature type="strand" evidence="7">
    <location>
        <begin position="181"/>
        <end position="184"/>
    </location>
</feature>
<feature type="strand" evidence="7">
    <location>
        <begin position="197"/>
        <end position="204"/>
    </location>
</feature>
<feature type="strand" evidence="7">
    <location>
        <begin position="207"/>
        <end position="210"/>
    </location>
</feature>
<feature type="strand" evidence="7">
    <location>
        <begin position="212"/>
        <end position="217"/>
    </location>
</feature>
<feature type="helix" evidence="7">
    <location>
        <begin position="220"/>
        <end position="232"/>
    </location>
</feature>
<feature type="strand" evidence="7">
    <location>
        <begin position="239"/>
        <end position="242"/>
    </location>
</feature>
<feature type="helix" evidence="7">
    <location>
        <begin position="249"/>
        <end position="255"/>
    </location>
</feature>
<feature type="helix" evidence="7">
    <location>
        <begin position="257"/>
        <end position="261"/>
    </location>
</feature>
<feature type="strand" evidence="7">
    <location>
        <begin position="265"/>
        <end position="270"/>
    </location>
</feature>
<feature type="helix" evidence="7">
    <location>
        <begin position="277"/>
        <end position="286"/>
    </location>
</feature>
<feature type="strand" evidence="7">
    <location>
        <begin position="290"/>
        <end position="293"/>
    </location>
</feature>
<feature type="helix" evidence="7">
    <location>
        <begin position="296"/>
        <end position="302"/>
    </location>
</feature>
<feature type="helix" evidence="7">
    <location>
        <begin position="307"/>
        <end position="309"/>
    </location>
</feature>
<feature type="strand" evidence="7">
    <location>
        <begin position="317"/>
        <end position="323"/>
    </location>
</feature>
<feature type="helix" evidence="7">
    <location>
        <begin position="327"/>
        <end position="337"/>
    </location>
</feature>
<feature type="strand" evidence="7">
    <location>
        <begin position="341"/>
        <end position="345"/>
    </location>
</feature>
<feature type="strand" evidence="7">
    <location>
        <begin position="368"/>
        <end position="370"/>
    </location>
</feature>
<feature type="strand" evidence="7">
    <location>
        <begin position="376"/>
        <end position="379"/>
    </location>
</feature>
<feature type="strand" evidence="7">
    <location>
        <begin position="393"/>
        <end position="398"/>
    </location>
</feature>
<feature type="strand" evidence="8">
    <location>
        <begin position="408"/>
        <end position="412"/>
    </location>
</feature>
<feature type="helix" evidence="7">
    <location>
        <begin position="413"/>
        <end position="419"/>
    </location>
</feature>
<feature type="strand" evidence="7">
    <location>
        <begin position="424"/>
        <end position="433"/>
    </location>
</feature>
<feature type="strand" evidence="7">
    <location>
        <begin position="439"/>
        <end position="447"/>
    </location>
</feature>
<feature type="strand" evidence="7">
    <location>
        <begin position="449"/>
        <end position="451"/>
    </location>
</feature>
<feature type="strand" evidence="7">
    <location>
        <begin position="454"/>
        <end position="456"/>
    </location>
</feature>
<feature type="helix" evidence="7">
    <location>
        <begin position="458"/>
        <end position="466"/>
    </location>
</feature>
<feature type="strand" evidence="7">
    <location>
        <begin position="471"/>
        <end position="481"/>
    </location>
</feature>
<feature type="turn" evidence="7">
    <location>
        <begin position="482"/>
        <end position="484"/>
    </location>
</feature>
<feature type="strand" evidence="7">
    <location>
        <begin position="485"/>
        <end position="494"/>
    </location>
</feature>
<feature type="helix" evidence="7">
    <location>
        <begin position="502"/>
        <end position="515"/>
    </location>
</feature>
<feature type="helix" evidence="7">
    <location>
        <begin position="518"/>
        <end position="520"/>
    </location>
</feature>
<feature type="strand" evidence="7">
    <location>
        <begin position="523"/>
        <end position="527"/>
    </location>
</feature>
<feature type="helix" evidence="7">
    <location>
        <begin position="541"/>
        <end position="552"/>
    </location>
</feature>
<feature type="turn" evidence="7">
    <location>
        <begin position="553"/>
        <end position="555"/>
    </location>
</feature>
<feature type="strand" evidence="8">
    <location>
        <begin position="558"/>
        <end position="560"/>
    </location>
</feature>
<feature type="strand" evidence="7">
    <location>
        <begin position="561"/>
        <end position="563"/>
    </location>
</feature>
<reference key="1">
    <citation type="journal article" date="2008" name="Appl. Environ. Microbiol.">
        <title>The genome sequence of the metal-mobilizing, extremely thermoacidophilic archaeon Metallosphaera sedula provides insights into bioleaching-associated metabolism.</title>
        <authorList>
            <person name="Auernik K.S."/>
            <person name="Maezato Y."/>
            <person name="Blum P.H."/>
            <person name="Kelly R.M."/>
        </authorList>
    </citation>
    <scope>NUCLEOTIDE SEQUENCE [LARGE SCALE GENOMIC DNA]</scope>
    <source>
        <strain>ATCC 51363 / DSM 5348 / JCM 9185 / NBRC 15509 / TH2</strain>
    </source>
</reference>
<reference key="2">
    <citation type="journal article" date="2013" name="J. Biol. Chem.">
        <title>Role of 4-hydroxybutyrate-CoA synthetase in the CO2 fixation cycle in thermoacidophilic archaea.</title>
        <authorList>
            <person name="Hawkins A.S."/>
            <person name="Han Y."/>
            <person name="Bennett R.K."/>
            <person name="Adams M.W."/>
            <person name="Kelly R.M."/>
        </authorList>
    </citation>
    <scope>FUNCTION</scope>
    <scope>CATALYTIC ACTIVITY</scope>
    <scope>BIOPHYSICOCHEMICAL PROPERTIES</scope>
    <scope>SUBSTRATE SPECIFICITY</scope>
    <source>
        <strain>ATCC 51363 / DSM 5348 / JCM 9185 / NBRC 15509 / TH2</strain>
    </source>
</reference>
<organism>
    <name type="scientific">Metallosphaera sedula (strain ATCC 51363 / DSM 5348 / JCM 9185 / NBRC 15509 / TH2)</name>
    <dbReference type="NCBI Taxonomy" id="399549"/>
    <lineage>
        <taxon>Archaea</taxon>
        <taxon>Thermoproteota</taxon>
        <taxon>Thermoprotei</taxon>
        <taxon>Sulfolobales</taxon>
        <taxon>Sulfolobaceae</taxon>
        <taxon>Metallosphaera</taxon>
    </lineage>
</organism>
<accession>A4YDT1</accession>
<keyword id="KW-0002">3D-structure</keyword>
<keyword id="KW-0067">ATP-binding</keyword>
<keyword id="KW-0276">Fatty acid metabolism</keyword>
<keyword id="KW-0436">Ligase</keyword>
<keyword id="KW-0443">Lipid metabolism</keyword>
<keyword id="KW-0460">Magnesium</keyword>
<keyword id="KW-0472">Membrane</keyword>
<keyword id="KW-0547">Nucleotide-binding</keyword>
<keyword id="KW-1185">Reference proteome</keyword>
<keyword id="KW-0812">Transmembrane</keyword>
<keyword id="KW-1133">Transmembrane helix</keyword>
<protein>
    <recommendedName>
        <fullName evidence="4">4-hydroxybutyrate--CoA ligase 1</fullName>
        <ecNumber evidence="3">6.2.1.40</ecNumber>
    </recommendedName>
    <alternativeName>
        <fullName evidence="6">Acetate--CoA ligase</fullName>
        <ecNumber evidence="3">6.2.1.1</ecNumber>
    </alternativeName>
    <alternativeName>
        <fullName evidence="6">Butyrate--CoA ligase</fullName>
        <ecNumber evidence="3">6.2.1.2</ecNumber>
    </alternativeName>
    <alternativeName>
        <fullName evidence="6">Propionate--CoA ligase</fullName>
        <ecNumber evidence="3">6.2.1.17</ecNumber>
    </alternativeName>
</protein>
<name>HBCL1_METS5</name>
<proteinExistence type="evidence at protein level"/>
<dbReference type="EC" id="6.2.1.40" evidence="3"/>
<dbReference type="EC" id="6.2.1.1" evidence="3"/>
<dbReference type="EC" id="6.2.1.2" evidence="3"/>
<dbReference type="EC" id="6.2.1.17" evidence="3"/>
<dbReference type="EMBL" id="CP000682">
    <property type="protein sequence ID" value="ABP94583.1"/>
    <property type="molecule type" value="Genomic_DNA"/>
</dbReference>
<dbReference type="RefSeq" id="WP_012020371.1">
    <property type="nucleotide sequence ID" value="NC_009440.1"/>
</dbReference>
<dbReference type="PDB" id="8BIQ">
    <property type="method" value="X-ray"/>
    <property type="resolution" value="2.80 A"/>
    <property type="chains" value="A/B/C/D=2-564"/>
</dbReference>
<dbReference type="PDB" id="8BIT">
    <property type="method" value="X-ray"/>
    <property type="resolution" value="3.10 A"/>
    <property type="chains" value="A/B=2-564"/>
</dbReference>
<dbReference type="PDBsum" id="8BIQ"/>
<dbReference type="PDBsum" id="8BIT"/>
<dbReference type="SMR" id="A4YDT1"/>
<dbReference type="STRING" id="399549.Msed_0406"/>
<dbReference type="GeneID" id="91754853"/>
<dbReference type="KEGG" id="mse:Msed_0406"/>
<dbReference type="eggNOG" id="arCOG04201">
    <property type="taxonomic scope" value="Archaea"/>
</dbReference>
<dbReference type="HOGENOM" id="CLU_000022_59_10_2"/>
<dbReference type="BioCyc" id="MetaCyc:MONOMER-13735"/>
<dbReference type="BRENDA" id="6.2.1.40">
    <property type="organism ID" value="7245"/>
</dbReference>
<dbReference type="Proteomes" id="UP000000242">
    <property type="component" value="Chromosome"/>
</dbReference>
<dbReference type="GO" id="GO:0016020">
    <property type="term" value="C:membrane"/>
    <property type="evidence" value="ECO:0007669"/>
    <property type="project" value="UniProtKB-SubCell"/>
</dbReference>
<dbReference type="GO" id="GO:0003987">
    <property type="term" value="F:acetate-CoA ligase activity"/>
    <property type="evidence" value="ECO:0000314"/>
    <property type="project" value="UniProtKB"/>
</dbReference>
<dbReference type="GO" id="GO:0005524">
    <property type="term" value="F:ATP binding"/>
    <property type="evidence" value="ECO:0007669"/>
    <property type="project" value="UniProtKB-KW"/>
</dbReference>
<dbReference type="GO" id="GO:0004321">
    <property type="term" value="F:fatty-acyl-CoA synthase activity"/>
    <property type="evidence" value="ECO:0007669"/>
    <property type="project" value="TreeGrafter"/>
</dbReference>
<dbReference type="GO" id="GO:0031956">
    <property type="term" value="F:medium-chain fatty acid-CoA ligase activity"/>
    <property type="evidence" value="ECO:0000314"/>
    <property type="project" value="UniProtKB"/>
</dbReference>
<dbReference type="GO" id="GO:0050218">
    <property type="term" value="F:propionate-CoA ligase activity"/>
    <property type="evidence" value="ECO:0000314"/>
    <property type="project" value="UniProtKB"/>
</dbReference>
<dbReference type="GO" id="GO:0006637">
    <property type="term" value="P:acyl-CoA metabolic process"/>
    <property type="evidence" value="ECO:0007669"/>
    <property type="project" value="TreeGrafter"/>
</dbReference>
<dbReference type="GO" id="GO:0006633">
    <property type="term" value="P:fatty acid biosynthetic process"/>
    <property type="evidence" value="ECO:0007669"/>
    <property type="project" value="TreeGrafter"/>
</dbReference>
<dbReference type="CDD" id="cd05972">
    <property type="entry name" value="MACS_like"/>
    <property type="match status" value="1"/>
</dbReference>
<dbReference type="FunFam" id="3.30.300.30:FF:000005">
    <property type="entry name" value="Acyl-coenzyme A synthetase ACSM5, mitochondrial"/>
    <property type="match status" value="1"/>
</dbReference>
<dbReference type="Gene3D" id="3.30.300.30">
    <property type="match status" value="1"/>
</dbReference>
<dbReference type="Gene3D" id="3.40.50.12780">
    <property type="entry name" value="N-terminal domain of ligase-like"/>
    <property type="match status" value="1"/>
</dbReference>
<dbReference type="InterPro" id="IPR025110">
    <property type="entry name" value="AMP-bd_C"/>
</dbReference>
<dbReference type="InterPro" id="IPR045851">
    <property type="entry name" value="AMP-bd_C_sf"/>
</dbReference>
<dbReference type="InterPro" id="IPR000873">
    <property type="entry name" value="AMP-dep_synth/lig_dom"/>
</dbReference>
<dbReference type="InterPro" id="IPR042099">
    <property type="entry name" value="ANL_N_sf"/>
</dbReference>
<dbReference type="InterPro" id="IPR051087">
    <property type="entry name" value="Mitochondrial_ACSM"/>
</dbReference>
<dbReference type="PANTHER" id="PTHR43605:SF10">
    <property type="entry name" value="ACYL-COA SYNTHETASE MEDIUM CHAIN FAMILY MEMBER 3"/>
    <property type="match status" value="1"/>
</dbReference>
<dbReference type="PANTHER" id="PTHR43605">
    <property type="entry name" value="ACYL-COENZYME A SYNTHETASE"/>
    <property type="match status" value="1"/>
</dbReference>
<dbReference type="Pfam" id="PF00501">
    <property type="entry name" value="AMP-binding"/>
    <property type="match status" value="1"/>
</dbReference>
<dbReference type="Pfam" id="PF13193">
    <property type="entry name" value="AMP-binding_C"/>
    <property type="match status" value="1"/>
</dbReference>
<dbReference type="SUPFAM" id="SSF56801">
    <property type="entry name" value="Acetyl-CoA synthetase-like"/>
    <property type="match status" value="1"/>
</dbReference>